<evidence type="ECO:0000255" key="1">
    <source>
        <dbReference type="HAMAP-Rule" id="MF_00052"/>
    </source>
</evidence>
<evidence type="ECO:0000255" key="2">
    <source>
        <dbReference type="PROSITE-ProRule" id="PRU01319"/>
    </source>
</evidence>
<proteinExistence type="inferred from homology"/>
<feature type="chain" id="PRO_0000334950" description="Ribonuclease HII">
    <location>
        <begin position="1"/>
        <end position="199"/>
    </location>
</feature>
<feature type="domain" description="RNase H type-2" evidence="2">
    <location>
        <begin position="9"/>
        <end position="198"/>
    </location>
</feature>
<feature type="binding site" evidence="1">
    <location>
        <position position="15"/>
    </location>
    <ligand>
        <name>a divalent metal cation</name>
        <dbReference type="ChEBI" id="CHEBI:60240"/>
    </ligand>
</feature>
<feature type="binding site" evidence="1">
    <location>
        <position position="16"/>
    </location>
    <ligand>
        <name>a divalent metal cation</name>
        <dbReference type="ChEBI" id="CHEBI:60240"/>
    </ligand>
</feature>
<feature type="binding site" evidence="1">
    <location>
        <position position="107"/>
    </location>
    <ligand>
        <name>a divalent metal cation</name>
        <dbReference type="ChEBI" id="CHEBI:60240"/>
    </ligand>
</feature>
<comment type="function">
    <text evidence="1">Endonuclease that specifically degrades the RNA of RNA-DNA hybrids.</text>
</comment>
<comment type="catalytic activity">
    <reaction evidence="1">
        <text>Endonucleolytic cleavage to 5'-phosphomonoester.</text>
        <dbReference type="EC" id="3.1.26.4"/>
    </reaction>
</comment>
<comment type="cofactor">
    <cofactor evidence="1">
        <name>Mn(2+)</name>
        <dbReference type="ChEBI" id="CHEBI:29035"/>
    </cofactor>
    <cofactor evidence="1">
        <name>Mg(2+)</name>
        <dbReference type="ChEBI" id="CHEBI:18420"/>
    </cofactor>
    <text evidence="1">Manganese or magnesium. Binds 1 divalent metal ion per monomer in the absence of substrate. May bind a second metal ion after substrate binding.</text>
</comment>
<comment type="subcellular location">
    <subcellularLocation>
        <location evidence="1">Cytoplasm</location>
    </subcellularLocation>
</comment>
<comment type="similarity">
    <text evidence="1">Belongs to the RNase HII family.</text>
</comment>
<protein>
    <recommendedName>
        <fullName evidence="1">Ribonuclease HII</fullName>
        <shortName evidence="1">RNase HII</shortName>
        <ecNumber evidence="1">3.1.26.4</ecNumber>
    </recommendedName>
</protein>
<organism>
    <name type="scientific">Saccharophagus degradans (strain 2-40 / ATCC 43961 / DSM 17024)</name>
    <dbReference type="NCBI Taxonomy" id="203122"/>
    <lineage>
        <taxon>Bacteria</taxon>
        <taxon>Pseudomonadati</taxon>
        <taxon>Pseudomonadota</taxon>
        <taxon>Gammaproteobacteria</taxon>
        <taxon>Cellvibrionales</taxon>
        <taxon>Cellvibrionaceae</taxon>
        <taxon>Saccharophagus</taxon>
    </lineage>
</organism>
<name>RNH2_SACD2</name>
<sequence>MFEYCMARQFVAGVDEVGRGPLAGDVVAAAVILGEDHGIEGLADSKKITEKKRDALFDVIQERAVSFCIARASVEEIDELNILHASLLAMKRAVEGLNIQPQYIYVDGNKLPKWTYSAEAVVKGDSLVEEISAASILAKVTRDREMVALDEKYPGYGLAGHKGYPTKVHMDALKRLGPTIIHRKSFAPVRAAIEQMNLF</sequence>
<dbReference type="EC" id="3.1.26.4" evidence="1"/>
<dbReference type="EMBL" id="CP000282">
    <property type="protein sequence ID" value="ABD81843.1"/>
    <property type="molecule type" value="Genomic_DNA"/>
</dbReference>
<dbReference type="RefSeq" id="WP_011469060.1">
    <property type="nucleotide sequence ID" value="NC_007912.1"/>
</dbReference>
<dbReference type="SMR" id="Q21HI6"/>
<dbReference type="STRING" id="203122.Sde_2583"/>
<dbReference type="GeneID" id="98614246"/>
<dbReference type="KEGG" id="sde:Sde_2583"/>
<dbReference type="eggNOG" id="COG0164">
    <property type="taxonomic scope" value="Bacteria"/>
</dbReference>
<dbReference type="HOGENOM" id="CLU_036532_3_2_6"/>
<dbReference type="OrthoDB" id="9803420at2"/>
<dbReference type="Proteomes" id="UP000001947">
    <property type="component" value="Chromosome"/>
</dbReference>
<dbReference type="GO" id="GO:0005737">
    <property type="term" value="C:cytoplasm"/>
    <property type="evidence" value="ECO:0007669"/>
    <property type="project" value="UniProtKB-SubCell"/>
</dbReference>
<dbReference type="GO" id="GO:0032299">
    <property type="term" value="C:ribonuclease H2 complex"/>
    <property type="evidence" value="ECO:0007669"/>
    <property type="project" value="TreeGrafter"/>
</dbReference>
<dbReference type="GO" id="GO:0030145">
    <property type="term" value="F:manganese ion binding"/>
    <property type="evidence" value="ECO:0007669"/>
    <property type="project" value="UniProtKB-UniRule"/>
</dbReference>
<dbReference type="GO" id="GO:0003723">
    <property type="term" value="F:RNA binding"/>
    <property type="evidence" value="ECO:0007669"/>
    <property type="project" value="InterPro"/>
</dbReference>
<dbReference type="GO" id="GO:0004523">
    <property type="term" value="F:RNA-DNA hybrid ribonuclease activity"/>
    <property type="evidence" value="ECO:0007669"/>
    <property type="project" value="UniProtKB-UniRule"/>
</dbReference>
<dbReference type="GO" id="GO:0043137">
    <property type="term" value="P:DNA replication, removal of RNA primer"/>
    <property type="evidence" value="ECO:0007669"/>
    <property type="project" value="TreeGrafter"/>
</dbReference>
<dbReference type="GO" id="GO:0006298">
    <property type="term" value="P:mismatch repair"/>
    <property type="evidence" value="ECO:0007669"/>
    <property type="project" value="TreeGrafter"/>
</dbReference>
<dbReference type="CDD" id="cd07182">
    <property type="entry name" value="RNase_HII_bacteria_HII_like"/>
    <property type="match status" value="1"/>
</dbReference>
<dbReference type="FunFam" id="3.30.420.10:FF:000006">
    <property type="entry name" value="Ribonuclease HII"/>
    <property type="match status" value="1"/>
</dbReference>
<dbReference type="Gene3D" id="3.30.420.10">
    <property type="entry name" value="Ribonuclease H-like superfamily/Ribonuclease H"/>
    <property type="match status" value="1"/>
</dbReference>
<dbReference type="HAMAP" id="MF_00052_B">
    <property type="entry name" value="RNase_HII_B"/>
    <property type="match status" value="1"/>
</dbReference>
<dbReference type="InterPro" id="IPR022898">
    <property type="entry name" value="RNase_HII"/>
</dbReference>
<dbReference type="InterPro" id="IPR001352">
    <property type="entry name" value="RNase_HII/HIII"/>
</dbReference>
<dbReference type="InterPro" id="IPR024567">
    <property type="entry name" value="RNase_HII/HIII_dom"/>
</dbReference>
<dbReference type="InterPro" id="IPR012337">
    <property type="entry name" value="RNaseH-like_sf"/>
</dbReference>
<dbReference type="InterPro" id="IPR036397">
    <property type="entry name" value="RNaseH_sf"/>
</dbReference>
<dbReference type="NCBIfam" id="NF000594">
    <property type="entry name" value="PRK00015.1-1"/>
    <property type="match status" value="1"/>
</dbReference>
<dbReference type="NCBIfam" id="NF000595">
    <property type="entry name" value="PRK00015.1-3"/>
    <property type="match status" value="1"/>
</dbReference>
<dbReference type="NCBIfam" id="NF000596">
    <property type="entry name" value="PRK00015.1-4"/>
    <property type="match status" value="1"/>
</dbReference>
<dbReference type="PANTHER" id="PTHR10954">
    <property type="entry name" value="RIBONUCLEASE H2 SUBUNIT A"/>
    <property type="match status" value="1"/>
</dbReference>
<dbReference type="PANTHER" id="PTHR10954:SF18">
    <property type="entry name" value="RIBONUCLEASE HII"/>
    <property type="match status" value="1"/>
</dbReference>
<dbReference type="Pfam" id="PF01351">
    <property type="entry name" value="RNase_HII"/>
    <property type="match status" value="1"/>
</dbReference>
<dbReference type="SUPFAM" id="SSF53098">
    <property type="entry name" value="Ribonuclease H-like"/>
    <property type="match status" value="1"/>
</dbReference>
<dbReference type="PROSITE" id="PS51975">
    <property type="entry name" value="RNASE_H_2"/>
    <property type="match status" value="1"/>
</dbReference>
<accession>Q21HI6</accession>
<reference key="1">
    <citation type="journal article" date="2008" name="PLoS Genet.">
        <title>Complete genome sequence of the complex carbohydrate-degrading marine bacterium, Saccharophagus degradans strain 2-40 T.</title>
        <authorList>
            <person name="Weiner R.M."/>
            <person name="Taylor L.E. II"/>
            <person name="Henrissat B."/>
            <person name="Hauser L."/>
            <person name="Land M."/>
            <person name="Coutinho P.M."/>
            <person name="Rancurel C."/>
            <person name="Saunders E.H."/>
            <person name="Longmire A.G."/>
            <person name="Zhang H."/>
            <person name="Bayer E.A."/>
            <person name="Gilbert H.J."/>
            <person name="Larimer F."/>
            <person name="Zhulin I.B."/>
            <person name="Ekborg N.A."/>
            <person name="Lamed R."/>
            <person name="Richardson P.M."/>
            <person name="Borovok I."/>
            <person name="Hutcheson S."/>
        </authorList>
    </citation>
    <scope>NUCLEOTIDE SEQUENCE [LARGE SCALE GENOMIC DNA]</scope>
    <source>
        <strain>2-40 / ATCC 43961 / DSM 17024</strain>
    </source>
</reference>
<keyword id="KW-0963">Cytoplasm</keyword>
<keyword id="KW-0255">Endonuclease</keyword>
<keyword id="KW-0378">Hydrolase</keyword>
<keyword id="KW-0464">Manganese</keyword>
<keyword id="KW-0479">Metal-binding</keyword>
<keyword id="KW-0540">Nuclease</keyword>
<keyword id="KW-1185">Reference proteome</keyword>
<gene>
    <name evidence="1" type="primary">rnhB</name>
    <name type="ordered locus">Sde_2583</name>
</gene>